<reference key="1">
    <citation type="submission" date="2007-03" db="EMBL/GenBank/DDBJ databases">
        <title>Complete sequence of Prosthecochloris vibrioformis DSM 265.</title>
        <authorList>
            <consortium name="US DOE Joint Genome Institute"/>
            <person name="Copeland A."/>
            <person name="Lucas S."/>
            <person name="Lapidus A."/>
            <person name="Barry K."/>
            <person name="Detter J.C."/>
            <person name="Glavina del Rio T."/>
            <person name="Hammon N."/>
            <person name="Israni S."/>
            <person name="Pitluck S."/>
            <person name="Schmutz J."/>
            <person name="Larimer F."/>
            <person name="Land M."/>
            <person name="Hauser L."/>
            <person name="Mikhailova N."/>
            <person name="Li T."/>
            <person name="Overmann J."/>
            <person name="Schuster S.C."/>
            <person name="Bryant D.A."/>
            <person name="Richardson P."/>
        </authorList>
    </citation>
    <scope>NUCLEOTIDE SEQUENCE [LARGE SCALE GENOMIC DNA]</scope>
    <source>
        <strain>DSM 265 / 1930</strain>
    </source>
</reference>
<dbReference type="EC" id="1.3.7.7" evidence="1"/>
<dbReference type="EMBL" id="CP000607">
    <property type="protein sequence ID" value="ABP36305.1"/>
    <property type="molecule type" value="Genomic_DNA"/>
</dbReference>
<dbReference type="SMR" id="A4SCU6"/>
<dbReference type="STRING" id="290318.Cvib_0283"/>
<dbReference type="KEGG" id="pvi:Cvib_0283"/>
<dbReference type="eggNOG" id="COG1348">
    <property type="taxonomic scope" value="Bacteria"/>
</dbReference>
<dbReference type="HOGENOM" id="CLU_059373_2_0_10"/>
<dbReference type="OrthoDB" id="9778641at2"/>
<dbReference type="UniPathway" id="UPA00671"/>
<dbReference type="GO" id="GO:0051539">
    <property type="term" value="F:4 iron, 4 sulfur cluster binding"/>
    <property type="evidence" value="ECO:0007669"/>
    <property type="project" value="UniProtKB-UniRule"/>
</dbReference>
<dbReference type="GO" id="GO:0005524">
    <property type="term" value="F:ATP binding"/>
    <property type="evidence" value="ECO:0007669"/>
    <property type="project" value="UniProtKB-UniRule"/>
</dbReference>
<dbReference type="GO" id="GO:0046872">
    <property type="term" value="F:metal ion binding"/>
    <property type="evidence" value="ECO:0007669"/>
    <property type="project" value="UniProtKB-KW"/>
</dbReference>
<dbReference type="GO" id="GO:0016730">
    <property type="term" value="F:oxidoreductase activity, acting on iron-sulfur proteins as donors"/>
    <property type="evidence" value="ECO:0007669"/>
    <property type="project" value="InterPro"/>
</dbReference>
<dbReference type="GO" id="GO:0016636">
    <property type="term" value="F:oxidoreductase activity, acting on the CH-CH group of donors, iron-sulfur protein as acceptor"/>
    <property type="evidence" value="ECO:0007669"/>
    <property type="project" value="UniProtKB-UniRule"/>
</dbReference>
<dbReference type="GO" id="GO:0036070">
    <property type="term" value="P:light-independent bacteriochlorophyll biosynthetic process"/>
    <property type="evidence" value="ECO:0007669"/>
    <property type="project" value="UniProtKB-UniRule"/>
</dbReference>
<dbReference type="GO" id="GO:0019685">
    <property type="term" value="P:photosynthesis, dark reaction"/>
    <property type="evidence" value="ECO:0007669"/>
    <property type="project" value="InterPro"/>
</dbReference>
<dbReference type="Gene3D" id="3.40.50.300">
    <property type="entry name" value="P-loop containing nucleotide triphosphate hydrolases"/>
    <property type="match status" value="1"/>
</dbReference>
<dbReference type="HAMAP" id="MF_00355">
    <property type="entry name" value="ChlL_BchL"/>
    <property type="match status" value="1"/>
</dbReference>
<dbReference type="InterPro" id="IPR030655">
    <property type="entry name" value="NifH/chlL_CS"/>
</dbReference>
<dbReference type="InterPro" id="IPR000392">
    <property type="entry name" value="NifH/frxC"/>
</dbReference>
<dbReference type="InterPro" id="IPR027417">
    <property type="entry name" value="P-loop_NTPase"/>
</dbReference>
<dbReference type="InterPro" id="IPR005971">
    <property type="entry name" value="Protochlorophyllide_ATP-bd"/>
</dbReference>
<dbReference type="NCBIfam" id="TIGR01281">
    <property type="entry name" value="DPOR_bchL"/>
    <property type="match status" value="1"/>
</dbReference>
<dbReference type="PANTHER" id="PTHR42864">
    <property type="entry name" value="LIGHT-INDEPENDENT PROTOCHLOROPHYLLIDE REDUCTASE IRON-SULFUR ATP-BINDING PROTEIN"/>
    <property type="match status" value="1"/>
</dbReference>
<dbReference type="PANTHER" id="PTHR42864:SF2">
    <property type="entry name" value="LIGHT-INDEPENDENT PROTOCHLOROPHYLLIDE REDUCTASE IRON-SULFUR ATP-BINDING PROTEIN"/>
    <property type="match status" value="1"/>
</dbReference>
<dbReference type="Pfam" id="PF00142">
    <property type="entry name" value="Fer4_NifH"/>
    <property type="match status" value="1"/>
</dbReference>
<dbReference type="PIRSF" id="PIRSF000363">
    <property type="entry name" value="Nitrogenase_iron"/>
    <property type="match status" value="1"/>
</dbReference>
<dbReference type="PRINTS" id="PR00091">
    <property type="entry name" value="NITROGNASEII"/>
</dbReference>
<dbReference type="SUPFAM" id="SSF52540">
    <property type="entry name" value="P-loop containing nucleoside triphosphate hydrolases"/>
    <property type="match status" value="1"/>
</dbReference>
<dbReference type="PROSITE" id="PS00746">
    <property type="entry name" value="NIFH_FRXC_1"/>
    <property type="match status" value="1"/>
</dbReference>
<dbReference type="PROSITE" id="PS00692">
    <property type="entry name" value="NIFH_FRXC_2"/>
    <property type="match status" value="1"/>
</dbReference>
<dbReference type="PROSITE" id="PS51026">
    <property type="entry name" value="NIFH_FRXC_3"/>
    <property type="match status" value="1"/>
</dbReference>
<sequence>MSLVLAVYGKGGIGKSTTSANISAALALKGAKVLQIGCDPKHDSTFPITGKLQKTVIEALEEVDFHHEELTAEDVIETGFAGIDGLEAGGPPAGSGCGGYVVGESVTLLQELGLYDKYDVILFDVLGDVVCGGFSAPLNYADYAIIIATNDFDSIFAANRLCMAIQQKSVRYKVKLAGIVANRVDYTTGGGTNMLDQFAEKVGTRLLAKVPYHELIRKSRFAGKTLFAMEDTPGKDECLVPYNEIAETLMQENTPASIPEPIGDREIFEIVGGWQ</sequence>
<comment type="function">
    <text evidence="1">Component of the dark-operative protochlorophyllide reductase (DPOR) that uses Mg-ATP and reduced ferredoxin to reduce ring D of protochlorophyllide (Pchlide) to form chlorophyllide a (Chlide). This reaction is light-independent. The L component serves as a unique electron donor to the NB-component of the complex, and binds Mg-ATP.</text>
</comment>
<comment type="catalytic activity">
    <reaction evidence="1">
        <text>chlorophyllide a + oxidized 2[4Fe-4S]-[ferredoxin] + 2 ADP + 2 phosphate = protochlorophyllide a + reduced 2[4Fe-4S]-[ferredoxin] + 2 ATP + 2 H2O</text>
        <dbReference type="Rhea" id="RHEA:28202"/>
        <dbReference type="Rhea" id="RHEA-COMP:10002"/>
        <dbReference type="Rhea" id="RHEA-COMP:10004"/>
        <dbReference type="ChEBI" id="CHEBI:15377"/>
        <dbReference type="ChEBI" id="CHEBI:30616"/>
        <dbReference type="ChEBI" id="CHEBI:33722"/>
        <dbReference type="ChEBI" id="CHEBI:33723"/>
        <dbReference type="ChEBI" id="CHEBI:43474"/>
        <dbReference type="ChEBI" id="CHEBI:83348"/>
        <dbReference type="ChEBI" id="CHEBI:83350"/>
        <dbReference type="ChEBI" id="CHEBI:456216"/>
        <dbReference type="EC" id="1.3.7.7"/>
    </reaction>
</comment>
<comment type="cofactor">
    <cofactor evidence="1">
        <name>[4Fe-4S] cluster</name>
        <dbReference type="ChEBI" id="CHEBI:49883"/>
    </cofactor>
    <text evidence="1">Binds 1 [4Fe-4S] cluster per dimer.</text>
</comment>
<comment type="pathway">
    <text evidence="1">Porphyrin-containing compound metabolism; bacteriochlorophyll biosynthesis (light-independent).</text>
</comment>
<comment type="subunit">
    <text evidence="1">Homodimer. Protochlorophyllide reductase is composed of three subunits; BchL, BchN and BchB.</text>
</comment>
<comment type="similarity">
    <text evidence="1">Belongs to the NifH/BchL/ChlL family.</text>
</comment>
<keyword id="KW-0004">4Fe-4S</keyword>
<keyword id="KW-0067">ATP-binding</keyword>
<keyword id="KW-0077">Bacteriochlorophyll biosynthesis</keyword>
<keyword id="KW-0149">Chlorophyll biosynthesis</keyword>
<keyword id="KW-0408">Iron</keyword>
<keyword id="KW-0411">Iron-sulfur</keyword>
<keyword id="KW-0460">Magnesium</keyword>
<keyword id="KW-0479">Metal-binding</keyword>
<keyword id="KW-0547">Nucleotide-binding</keyword>
<keyword id="KW-0560">Oxidoreductase</keyword>
<keyword id="KW-0602">Photosynthesis</keyword>
<protein>
    <recommendedName>
        <fullName evidence="1">Light-independent protochlorophyllide reductase iron-sulfur ATP-binding protein</fullName>
        <shortName evidence="1">DPOR subunit L</shortName>
        <shortName evidence="1">LI-POR subunit L</shortName>
        <ecNumber evidence="1">1.3.7.7</ecNumber>
    </recommendedName>
</protein>
<name>BCHL_CHLPM</name>
<proteinExistence type="inferred from homology"/>
<organism>
    <name type="scientific">Chlorobium phaeovibrioides (strain DSM 265 / 1930)</name>
    <name type="common">Prosthecochloris vibrioformis (strain DSM 265)</name>
    <dbReference type="NCBI Taxonomy" id="290318"/>
    <lineage>
        <taxon>Bacteria</taxon>
        <taxon>Pseudomonadati</taxon>
        <taxon>Chlorobiota</taxon>
        <taxon>Chlorobiia</taxon>
        <taxon>Chlorobiales</taxon>
        <taxon>Chlorobiaceae</taxon>
        <taxon>Chlorobium/Pelodictyon group</taxon>
        <taxon>Chlorobium</taxon>
    </lineage>
</organism>
<gene>
    <name evidence="1" type="primary">bchL</name>
    <name type="ordered locus">Cvib_0283</name>
</gene>
<feature type="chain" id="PRO_1000079388" description="Light-independent protochlorophyllide reductase iron-sulfur ATP-binding protein">
    <location>
        <begin position="1"/>
        <end position="275"/>
    </location>
</feature>
<feature type="binding site" evidence="1">
    <location>
        <begin position="12"/>
        <end position="17"/>
    </location>
    <ligand>
        <name>ATP</name>
        <dbReference type="ChEBI" id="CHEBI:30616"/>
    </ligand>
</feature>
<feature type="binding site" evidence="1">
    <location>
        <position position="16"/>
    </location>
    <ligand>
        <name>Mg(2+)</name>
        <dbReference type="ChEBI" id="CHEBI:18420"/>
    </ligand>
</feature>
<feature type="binding site" evidence="1">
    <location>
        <position position="41"/>
    </location>
    <ligand>
        <name>ATP</name>
        <dbReference type="ChEBI" id="CHEBI:30616"/>
    </ligand>
</feature>
<feature type="binding site" evidence="1">
    <location>
        <position position="97"/>
    </location>
    <ligand>
        <name>[4Fe-4S] cluster</name>
        <dbReference type="ChEBI" id="CHEBI:49883"/>
        <note>ligand shared between dimeric partners</note>
    </ligand>
</feature>
<feature type="binding site" evidence="1">
    <location>
        <position position="131"/>
    </location>
    <ligand>
        <name>[4Fe-4S] cluster</name>
        <dbReference type="ChEBI" id="CHEBI:49883"/>
        <note>ligand shared between dimeric partners</note>
    </ligand>
</feature>
<feature type="binding site" evidence="1">
    <location>
        <begin position="182"/>
        <end position="183"/>
    </location>
    <ligand>
        <name>ATP</name>
        <dbReference type="ChEBI" id="CHEBI:30616"/>
    </ligand>
</feature>
<evidence type="ECO:0000255" key="1">
    <source>
        <dbReference type="HAMAP-Rule" id="MF_00355"/>
    </source>
</evidence>
<accession>A4SCU6</accession>